<dbReference type="EMBL" id="BC099741">
    <property type="protein sequence ID" value="AAH99741.1"/>
    <property type="molecule type" value="mRNA"/>
</dbReference>
<dbReference type="RefSeq" id="NP_001025198.1">
    <property type="nucleotide sequence ID" value="NM_001030027.1"/>
</dbReference>
<dbReference type="SMR" id="Q499W2"/>
<dbReference type="FunCoup" id="Q499W2">
    <property type="interactions" value="1658"/>
</dbReference>
<dbReference type="STRING" id="10116.ENSRNOP00000024301"/>
<dbReference type="iPTMnet" id="Q499W2"/>
<dbReference type="PhosphoSitePlus" id="Q499W2"/>
<dbReference type="jPOST" id="Q499W2"/>
<dbReference type="PaxDb" id="10116-ENSRNOP00000024301"/>
<dbReference type="GeneID" id="290842"/>
<dbReference type="KEGG" id="rno:290842"/>
<dbReference type="UCSC" id="RGD:1307397">
    <property type="organism name" value="rat"/>
</dbReference>
<dbReference type="AGR" id="RGD:1307397"/>
<dbReference type="CTD" id="84296"/>
<dbReference type="RGD" id="1307397">
    <property type="gene designation" value="Gins4"/>
</dbReference>
<dbReference type="eggNOG" id="KOG3176">
    <property type="taxonomic scope" value="Eukaryota"/>
</dbReference>
<dbReference type="InParanoid" id="Q499W2"/>
<dbReference type="OrthoDB" id="41104at9989"/>
<dbReference type="PhylomeDB" id="Q499W2"/>
<dbReference type="Reactome" id="R-RNO-176974">
    <property type="pathway name" value="Unwinding of DNA"/>
</dbReference>
<dbReference type="PRO" id="PR:Q499W2"/>
<dbReference type="Proteomes" id="UP000002494">
    <property type="component" value="Unplaced"/>
</dbReference>
<dbReference type="GO" id="GO:0071162">
    <property type="term" value="C:CMG complex"/>
    <property type="evidence" value="ECO:0000250"/>
    <property type="project" value="UniProtKB"/>
</dbReference>
<dbReference type="GO" id="GO:0005737">
    <property type="term" value="C:cytoplasm"/>
    <property type="evidence" value="ECO:0000266"/>
    <property type="project" value="RGD"/>
</dbReference>
<dbReference type="GO" id="GO:0000811">
    <property type="term" value="C:GINS complex"/>
    <property type="evidence" value="ECO:0000266"/>
    <property type="project" value="RGD"/>
</dbReference>
<dbReference type="GO" id="GO:0005634">
    <property type="term" value="C:nucleus"/>
    <property type="evidence" value="ECO:0000266"/>
    <property type="project" value="RGD"/>
</dbReference>
<dbReference type="GO" id="GO:0006261">
    <property type="term" value="P:DNA-templated DNA replication"/>
    <property type="evidence" value="ECO:0007669"/>
    <property type="project" value="InterPro"/>
</dbReference>
<dbReference type="GO" id="GO:0000727">
    <property type="term" value="P:double-strand break repair via break-induced replication"/>
    <property type="evidence" value="ECO:0000318"/>
    <property type="project" value="GO_Central"/>
</dbReference>
<dbReference type="GO" id="GO:0001833">
    <property type="term" value="P:inner cell mass cell proliferation"/>
    <property type="evidence" value="ECO:0000266"/>
    <property type="project" value="RGD"/>
</dbReference>
<dbReference type="CDD" id="cd11711">
    <property type="entry name" value="GINS_A_Sld5"/>
    <property type="match status" value="1"/>
</dbReference>
<dbReference type="CDD" id="cd21692">
    <property type="entry name" value="GINS_B_Sld5"/>
    <property type="match status" value="1"/>
</dbReference>
<dbReference type="FunFam" id="1.20.58.1030:FF:000002">
    <property type="entry name" value="DNA replication complex GINS protein SLD5"/>
    <property type="match status" value="1"/>
</dbReference>
<dbReference type="FunFam" id="3.40.5.60:FF:000001">
    <property type="entry name" value="DNA replication complex GINS protein SLD5"/>
    <property type="match status" value="1"/>
</dbReference>
<dbReference type="Gene3D" id="1.20.58.1030">
    <property type="match status" value="1"/>
</dbReference>
<dbReference type="Gene3D" id="3.40.5.60">
    <property type="match status" value="1"/>
</dbReference>
<dbReference type="InterPro" id="IPR021151">
    <property type="entry name" value="GINS_A"/>
</dbReference>
<dbReference type="InterPro" id="IPR036224">
    <property type="entry name" value="GINS_bundle-like_dom_sf"/>
</dbReference>
<dbReference type="InterPro" id="IPR008591">
    <property type="entry name" value="GINS_Sld5"/>
</dbReference>
<dbReference type="InterPro" id="IPR031633">
    <property type="entry name" value="SLD5_C"/>
</dbReference>
<dbReference type="InterPro" id="IPR038749">
    <property type="entry name" value="Sld5_GINS_A"/>
</dbReference>
<dbReference type="PANTHER" id="PTHR21206:SF0">
    <property type="entry name" value="DNA REPLICATION COMPLEX GINS PROTEIN SLD5"/>
    <property type="match status" value="1"/>
</dbReference>
<dbReference type="PANTHER" id="PTHR21206">
    <property type="entry name" value="SLD5 PROTEIN"/>
    <property type="match status" value="1"/>
</dbReference>
<dbReference type="Pfam" id="PF05916">
    <property type="entry name" value="Sld5"/>
    <property type="match status" value="1"/>
</dbReference>
<dbReference type="Pfam" id="PF16922">
    <property type="entry name" value="SLD5_C"/>
    <property type="match status" value="1"/>
</dbReference>
<dbReference type="PIRSF" id="PIRSF007764">
    <property type="entry name" value="Sld5"/>
    <property type="match status" value="1"/>
</dbReference>
<dbReference type="SUPFAM" id="SSF158573">
    <property type="entry name" value="GINS helical bundle-like"/>
    <property type="match status" value="1"/>
</dbReference>
<dbReference type="SUPFAM" id="SSF160059">
    <property type="entry name" value="PriA/YqbF domain"/>
    <property type="match status" value="1"/>
</dbReference>
<proteinExistence type="evidence at protein level"/>
<protein>
    <recommendedName>
        <fullName>DNA replication complex GINS protein SLD5</fullName>
    </recommendedName>
    <alternativeName>
        <fullName>GINS complex subunit 4</fullName>
    </alternativeName>
    <component>
        <recommendedName>
            <fullName>DNA replication complex GINS protein SLD5, N-terminally processed</fullName>
        </recommendedName>
    </component>
</protein>
<evidence type="ECO:0000250" key="1"/>
<evidence type="ECO:0000250" key="2">
    <source>
        <dbReference type="UniProtKB" id="O75419"/>
    </source>
</evidence>
<evidence type="ECO:0000250" key="3">
    <source>
        <dbReference type="UniProtKB" id="Q9BRT9"/>
    </source>
</evidence>
<evidence type="ECO:0000305" key="4"/>
<evidence type="ECO:0007744" key="5">
    <source>
    </source>
</evidence>
<comment type="function">
    <text evidence="2">Required for initiation of chromosomal DNA replication. Core component of CDC45-MCM-GINS (CMG) helicase, the molecular machine that unwinds template DNA during replication, and around which the replisome is built.</text>
</comment>
<comment type="subunit">
    <text evidence="2">Component of the CMG helicase complex, a hexameric ring of related MCM2-7 subunits stabilized by CDC45 and the tetrameric GINS complex. Associated with ORC2. Interacts with HELB.</text>
</comment>
<comment type="subcellular location">
    <subcellularLocation>
        <location evidence="2">Nucleus</location>
    </subcellularLocation>
    <subcellularLocation>
        <location evidence="2">Chromosome</location>
    </subcellularLocation>
    <text evidence="2">Associates with chromatin.</text>
</comment>
<comment type="similarity">
    <text evidence="4">Belongs to the GINS4/SLD5 family.</text>
</comment>
<keyword id="KW-0007">Acetylation</keyword>
<keyword id="KW-0158">Chromosome</keyword>
<keyword id="KW-0235">DNA replication</keyword>
<keyword id="KW-0539">Nucleus</keyword>
<keyword id="KW-0597">Phosphoprotein</keyword>
<keyword id="KW-1185">Reference proteome</keyword>
<feature type="chain" id="PRO_0000421796" description="DNA replication complex GINS protein SLD5">
    <location>
        <begin position="1"/>
        <end position="223"/>
    </location>
</feature>
<feature type="initiator methionine" description="Removed; alternate" evidence="3">
    <location>
        <position position="1"/>
    </location>
</feature>
<feature type="chain" id="PRO_0000327622" description="DNA replication complex GINS protein SLD5, N-terminally processed">
    <location>
        <begin position="2"/>
        <end position="223"/>
    </location>
</feature>
<feature type="region of interest" description="Important for GINS complex assembly" evidence="1">
    <location>
        <begin position="166"/>
        <end position="223"/>
    </location>
</feature>
<feature type="modified residue" description="N-acetylmethionine" evidence="3">
    <location>
        <position position="1"/>
    </location>
</feature>
<feature type="modified residue" description="N-acetylthreonine; in DNA replication complex GINS protein SLD5, N-terminally processed" evidence="3">
    <location>
        <position position="2"/>
    </location>
</feature>
<feature type="modified residue" description="Phosphoserine" evidence="5">
    <location>
        <position position="12"/>
    </location>
</feature>
<feature type="modified residue" description="Phosphoserine" evidence="5">
    <location>
        <position position="16"/>
    </location>
</feature>
<reference key="1">
    <citation type="journal article" date="2004" name="Genome Res.">
        <title>The status, quality, and expansion of the NIH full-length cDNA project: the Mammalian Gene Collection (MGC).</title>
        <authorList>
            <consortium name="The MGC Project Team"/>
        </authorList>
    </citation>
    <scope>NUCLEOTIDE SEQUENCE [LARGE SCALE MRNA]</scope>
    <source>
        <tissue>Prostate</tissue>
    </source>
</reference>
<reference key="2">
    <citation type="journal article" date="2012" name="Nat. Commun.">
        <title>Quantitative maps of protein phosphorylation sites across 14 different rat organs and tissues.</title>
        <authorList>
            <person name="Lundby A."/>
            <person name="Secher A."/>
            <person name="Lage K."/>
            <person name="Nordsborg N.B."/>
            <person name="Dmytriyev A."/>
            <person name="Lundby C."/>
            <person name="Olsen J.V."/>
        </authorList>
    </citation>
    <scope>PHOSPHORYLATION [LARGE SCALE ANALYSIS] AT SER-12 AND SER-16</scope>
    <scope>IDENTIFICATION BY MASS SPECTROMETRY [LARGE SCALE ANALYSIS]</scope>
</reference>
<organism>
    <name type="scientific">Rattus norvegicus</name>
    <name type="common">Rat</name>
    <dbReference type="NCBI Taxonomy" id="10116"/>
    <lineage>
        <taxon>Eukaryota</taxon>
        <taxon>Metazoa</taxon>
        <taxon>Chordata</taxon>
        <taxon>Craniata</taxon>
        <taxon>Vertebrata</taxon>
        <taxon>Euteleostomi</taxon>
        <taxon>Mammalia</taxon>
        <taxon>Eutheria</taxon>
        <taxon>Euarchontoglires</taxon>
        <taxon>Glires</taxon>
        <taxon>Rodentia</taxon>
        <taxon>Myomorpha</taxon>
        <taxon>Muroidea</taxon>
        <taxon>Muridae</taxon>
        <taxon>Murinae</taxon>
        <taxon>Rattus</taxon>
    </lineage>
</organism>
<sequence>MTEVQDLHGQDSDEGSEEVVLTPAELIERLEQAWMNEKFAPELLESKSEIVECVMEQLEHMEENLRRAKKGDLKVSIHRMEMERIRYVLSSYLRCRLMKIEKFFPHILEKEKTRPAGEPSSLSPEEFVFAKEYMDHTETHFKNVALKHMPPNLQKVDLMRAVPKPDLDSYVFLRVKERQENILVEPEADEQRDYVIDLEEGSQHLIRYKTIAPLVASGAVQLI</sequence>
<accession>Q499W2</accession>
<name>SLD5_RAT</name>
<gene>
    <name type="primary">Gins4</name>
    <name type="synonym">Sld5</name>
</gene>